<feature type="chain" id="PRO_1000047467" description="Glycine--tRNA ligase alpha subunit">
    <location>
        <begin position="1"/>
        <end position="315"/>
    </location>
</feature>
<comment type="catalytic activity">
    <reaction evidence="1">
        <text>tRNA(Gly) + glycine + ATP = glycyl-tRNA(Gly) + AMP + diphosphate</text>
        <dbReference type="Rhea" id="RHEA:16013"/>
        <dbReference type="Rhea" id="RHEA-COMP:9664"/>
        <dbReference type="Rhea" id="RHEA-COMP:9683"/>
        <dbReference type="ChEBI" id="CHEBI:30616"/>
        <dbReference type="ChEBI" id="CHEBI:33019"/>
        <dbReference type="ChEBI" id="CHEBI:57305"/>
        <dbReference type="ChEBI" id="CHEBI:78442"/>
        <dbReference type="ChEBI" id="CHEBI:78522"/>
        <dbReference type="ChEBI" id="CHEBI:456215"/>
        <dbReference type="EC" id="6.1.1.14"/>
    </reaction>
</comment>
<comment type="subunit">
    <text evidence="1">Tetramer of two alpha and two beta subunits.</text>
</comment>
<comment type="subcellular location">
    <subcellularLocation>
        <location evidence="1">Cytoplasm</location>
    </subcellularLocation>
</comment>
<comment type="similarity">
    <text evidence="1">Belongs to the class-II aminoacyl-tRNA synthetase family.</text>
</comment>
<keyword id="KW-0030">Aminoacyl-tRNA synthetase</keyword>
<keyword id="KW-0067">ATP-binding</keyword>
<keyword id="KW-0963">Cytoplasm</keyword>
<keyword id="KW-0436">Ligase</keyword>
<keyword id="KW-0547">Nucleotide-binding</keyword>
<keyword id="KW-0648">Protein biosynthesis</keyword>
<sequence>MSQTTPAVRTFQDLILALQNYWAEQGCVVLQPYDMEVGAGTFHTATFLRAIGPETWNAAYVQPSRRPTDGRYGENPNRLQHYYQFQVVLKPNPENFQELYLGSLKAIGIDPLVHDIRFVEDNWESPTLGAWGLGWEIWLNGMEVTQFTYFQQVGGIECYPVTGEITYGLERLAMYLQGVDSVYDLIWTDGPFGKVTYGDVFHQNEVEQSTFNFEHANVPKLFELFDFYESEANRLIELELPLPTYEMVLKASHTFNLLDARRAISVTERQRYILRVRTLARAVAQSYLQARARLGFPMATPELRDEVLAKLKEAE</sequence>
<protein>
    <recommendedName>
        <fullName evidence="1">Glycine--tRNA ligase alpha subunit</fullName>
        <ecNumber evidence="1">6.1.1.14</ecNumber>
    </recommendedName>
    <alternativeName>
        <fullName evidence="1">Glycyl-tRNA synthetase alpha subunit</fullName>
        <shortName evidence="1">GlyRS</shortName>
    </alternativeName>
</protein>
<name>SYGA_PSEP7</name>
<proteinExistence type="inferred from homology"/>
<dbReference type="EC" id="6.1.1.14" evidence="1"/>
<dbReference type="EMBL" id="CP000744">
    <property type="protein sequence ID" value="ABR85958.1"/>
    <property type="molecule type" value="Genomic_DNA"/>
</dbReference>
<dbReference type="RefSeq" id="WP_011979042.1">
    <property type="nucleotide sequence ID" value="NC_009656.1"/>
</dbReference>
<dbReference type="SMR" id="A6UX70"/>
<dbReference type="GeneID" id="77218550"/>
<dbReference type="KEGG" id="pap:PSPA7_0009"/>
<dbReference type="HOGENOM" id="CLU_057066_1_0_6"/>
<dbReference type="Proteomes" id="UP000001582">
    <property type="component" value="Chromosome"/>
</dbReference>
<dbReference type="GO" id="GO:0005829">
    <property type="term" value="C:cytosol"/>
    <property type="evidence" value="ECO:0007669"/>
    <property type="project" value="TreeGrafter"/>
</dbReference>
<dbReference type="GO" id="GO:0005524">
    <property type="term" value="F:ATP binding"/>
    <property type="evidence" value="ECO:0007669"/>
    <property type="project" value="UniProtKB-UniRule"/>
</dbReference>
<dbReference type="GO" id="GO:0004820">
    <property type="term" value="F:glycine-tRNA ligase activity"/>
    <property type="evidence" value="ECO:0007669"/>
    <property type="project" value="UniProtKB-UniRule"/>
</dbReference>
<dbReference type="GO" id="GO:0006426">
    <property type="term" value="P:glycyl-tRNA aminoacylation"/>
    <property type="evidence" value="ECO:0007669"/>
    <property type="project" value="UniProtKB-UniRule"/>
</dbReference>
<dbReference type="CDD" id="cd00733">
    <property type="entry name" value="GlyRS_alpha_core"/>
    <property type="match status" value="1"/>
</dbReference>
<dbReference type="FunFam" id="3.30.930.10:FF:000006">
    <property type="entry name" value="Glycine--tRNA ligase alpha subunit"/>
    <property type="match status" value="1"/>
</dbReference>
<dbReference type="Gene3D" id="3.30.930.10">
    <property type="entry name" value="Bira Bifunctional Protein, Domain 2"/>
    <property type="match status" value="1"/>
</dbReference>
<dbReference type="Gene3D" id="1.20.58.180">
    <property type="entry name" value="Class II aaRS and biotin synthetases, domain 2"/>
    <property type="match status" value="1"/>
</dbReference>
<dbReference type="HAMAP" id="MF_00254">
    <property type="entry name" value="Gly_tRNA_synth_alpha"/>
    <property type="match status" value="1"/>
</dbReference>
<dbReference type="InterPro" id="IPR045864">
    <property type="entry name" value="aa-tRNA-synth_II/BPL/LPL"/>
</dbReference>
<dbReference type="InterPro" id="IPR006194">
    <property type="entry name" value="Gly-tRNA-synth_heterodimer"/>
</dbReference>
<dbReference type="InterPro" id="IPR002310">
    <property type="entry name" value="Gly-tRNA_ligase_asu"/>
</dbReference>
<dbReference type="NCBIfam" id="TIGR00388">
    <property type="entry name" value="glyQ"/>
    <property type="match status" value="1"/>
</dbReference>
<dbReference type="NCBIfam" id="NF006827">
    <property type="entry name" value="PRK09348.1"/>
    <property type="match status" value="1"/>
</dbReference>
<dbReference type="PANTHER" id="PTHR30075:SF2">
    <property type="entry name" value="GLYCINE--TRNA LIGASE, CHLOROPLASTIC_MITOCHONDRIAL 2"/>
    <property type="match status" value="1"/>
</dbReference>
<dbReference type="PANTHER" id="PTHR30075">
    <property type="entry name" value="GLYCYL-TRNA SYNTHETASE"/>
    <property type="match status" value="1"/>
</dbReference>
<dbReference type="Pfam" id="PF02091">
    <property type="entry name" value="tRNA-synt_2e"/>
    <property type="match status" value="1"/>
</dbReference>
<dbReference type="PRINTS" id="PR01044">
    <property type="entry name" value="TRNASYNTHGA"/>
</dbReference>
<dbReference type="SUPFAM" id="SSF55681">
    <property type="entry name" value="Class II aaRS and biotin synthetases"/>
    <property type="match status" value="1"/>
</dbReference>
<dbReference type="PROSITE" id="PS50861">
    <property type="entry name" value="AA_TRNA_LIGASE_II_GLYAB"/>
    <property type="match status" value="1"/>
</dbReference>
<accession>A6UX70</accession>
<gene>
    <name evidence="1" type="primary">glyQ</name>
    <name type="ordered locus">PSPA7_0009</name>
</gene>
<reference key="1">
    <citation type="submission" date="2007-06" db="EMBL/GenBank/DDBJ databases">
        <authorList>
            <person name="Dodson R.J."/>
            <person name="Harkins D."/>
            <person name="Paulsen I.T."/>
        </authorList>
    </citation>
    <scope>NUCLEOTIDE SEQUENCE [LARGE SCALE GENOMIC DNA]</scope>
    <source>
        <strain>DSM 24068 / PA7</strain>
    </source>
</reference>
<organism>
    <name type="scientific">Pseudomonas paraeruginosa (strain DSM 24068 / PA7)</name>
    <name type="common">Pseudomonas aeruginosa (strain PA7)</name>
    <dbReference type="NCBI Taxonomy" id="381754"/>
    <lineage>
        <taxon>Bacteria</taxon>
        <taxon>Pseudomonadati</taxon>
        <taxon>Pseudomonadota</taxon>
        <taxon>Gammaproteobacteria</taxon>
        <taxon>Pseudomonadales</taxon>
        <taxon>Pseudomonadaceae</taxon>
        <taxon>Pseudomonas</taxon>
        <taxon>Pseudomonas paraeruginosa</taxon>
    </lineage>
</organism>
<evidence type="ECO:0000255" key="1">
    <source>
        <dbReference type="HAMAP-Rule" id="MF_00254"/>
    </source>
</evidence>